<protein>
    <recommendedName>
        <fullName>HMG box-containing protein 1</fullName>
    </recommendedName>
    <alternativeName>
        <fullName>HMG box transcription factor 1</fullName>
    </alternativeName>
    <alternativeName>
        <fullName>High mobility group box transcription factor 1</fullName>
    </alternativeName>
</protein>
<keyword id="KW-0002">3D-structure</keyword>
<keyword id="KW-0025">Alternative splicing</keyword>
<keyword id="KW-0238">DNA-binding</keyword>
<keyword id="KW-0539">Nucleus</keyword>
<keyword id="KW-1267">Proteomics identification</keyword>
<keyword id="KW-1185">Reference proteome</keyword>
<keyword id="KW-0678">Repressor</keyword>
<keyword id="KW-0804">Transcription</keyword>
<keyword id="KW-0805">Transcription regulation</keyword>
<keyword id="KW-0832">Ubl conjugation</keyword>
<keyword id="KW-0879">Wnt signaling pathway</keyword>
<dbReference type="EMBL" id="AF182038">
    <property type="protein sequence ID" value="AAD56225.1"/>
    <property type="molecule type" value="mRNA"/>
</dbReference>
<dbReference type="EMBL" id="AK074353">
    <property type="protein sequence ID" value="BAB85059.1"/>
    <property type="status" value="ALT_INIT"/>
    <property type="molecule type" value="mRNA"/>
</dbReference>
<dbReference type="EMBL" id="AK122785">
    <property type="protein sequence ID" value="BAG53729.1"/>
    <property type="molecule type" value="mRNA"/>
</dbReference>
<dbReference type="EMBL" id="AC004492">
    <property type="protein sequence ID" value="AAC08317.1"/>
    <property type="molecule type" value="Genomic_DNA"/>
</dbReference>
<dbReference type="EMBL" id="CH471070">
    <property type="protein sequence ID" value="EAW83392.1"/>
    <property type="molecule type" value="Genomic_DNA"/>
</dbReference>
<dbReference type="EMBL" id="BC017069">
    <property type="protein sequence ID" value="AAH17069.1"/>
    <property type="molecule type" value="mRNA"/>
</dbReference>
<dbReference type="EMBL" id="BC022329">
    <property type="protein sequence ID" value="AAH22329.1"/>
    <property type="molecule type" value="mRNA"/>
</dbReference>
<dbReference type="CCDS" id="CCDS5741.1">
    <molecule id="O60381-1"/>
</dbReference>
<dbReference type="RefSeq" id="NP_001231191.1">
    <property type="nucleotide sequence ID" value="NM_001244262.1"/>
</dbReference>
<dbReference type="RefSeq" id="NP_036389.2">
    <molecule id="O60381-1"/>
    <property type="nucleotide sequence ID" value="NM_012257.3"/>
</dbReference>
<dbReference type="RefSeq" id="XP_005250323.1">
    <molecule id="O60381-1"/>
    <property type="nucleotide sequence ID" value="XM_005250266.4"/>
</dbReference>
<dbReference type="RefSeq" id="XP_005250324.1">
    <property type="nucleotide sequence ID" value="XM_005250267.2"/>
</dbReference>
<dbReference type="RefSeq" id="XP_016867456.1">
    <molecule id="O60381-1"/>
    <property type="nucleotide sequence ID" value="XM_017011967.3"/>
</dbReference>
<dbReference type="RefSeq" id="XP_024302481.1">
    <molecule id="O60381-1"/>
    <property type="nucleotide sequence ID" value="XM_024446713.2"/>
</dbReference>
<dbReference type="RefSeq" id="XP_024302482.1">
    <molecule id="O60381-1"/>
    <property type="nucleotide sequence ID" value="XM_024446714.2"/>
</dbReference>
<dbReference type="RefSeq" id="XP_054188104.1">
    <molecule id="O60381-1"/>
    <property type="nucleotide sequence ID" value="XM_054332129.1"/>
</dbReference>
<dbReference type="RefSeq" id="XP_054188105.1">
    <molecule id="O60381-1"/>
    <property type="nucleotide sequence ID" value="XM_054332130.1"/>
</dbReference>
<dbReference type="RefSeq" id="XP_054188106.1">
    <molecule id="O60381-1"/>
    <property type="nucleotide sequence ID" value="XM_054332131.1"/>
</dbReference>
<dbReference type="RefSeq" id="XP_054213847.1">
    <molecule id="O60381-1"/>
    <property type="nucleotide sequence ID" value="XM_054357872.1"/>
</dbReference>
<dbReference type="RefSeq" id="XP_054213848.1">
    <molecule id="O60381-1"/>
    <property type="nucleotide sequence ID" value="XM_054357873.1"/>
</dbReference>
<dbReference type="RefSeq" id="XP_054213849.1">
    <molecule id="O60381-1"/>
    <property type="nucleotide sequence ID" value="XM_054357874.1"/>
</dbReference>
<dbReference type="RefSeq" id="XP_054213850.1">
    <molecule id="O60381-1"/>
    <property type="nucleotide sequence ID" value="XM_054357875.1"/>
</dbReference>
<dbReference type="PDB" id="2E6O">
    <property type="method" value="NMR"/>
    <property type="chains" value="A=424-503"/>
</dbReference>
<dbReference type="PDB" id="3QVE">
    <property type="method" value="X-ray"/>
    <property type="resolution" value="2.04 A"/>
    <property type="chains" value="A/B/C=206-342"/>
</dbReference>
<dbReference type="PDBsum" id="2E6O"/>
<dbReference type="PDBsum" id="3QVE"/>
<dbReference type="SMR" id="O60381"/>
<dbReference type="BioGRID" id="117927">
    <property type="interactions" value="121"/>
</dbReference>
<dbReference type="FunCoup" id="O60381">
    <property type="interactions" value="2547"/>
</dbReference>
<dbReference type="IntAct" id="O60381">
    <property type="interactions" value="16"/>
</dbReference>
<dbReference type="MINT" id="O60381"/>
<dbReference type="STRING" id="9606.ENSP00000222574"/>
<dbReference type="GlyCosmos" id="O60381">
    <property type="glycosylation" value="1 site, 1 glycan"/>
</dbReference>
<dbReference type="GlyGen" id="O60381">
    <property type="glycosylation" value="1 site, 1 O-linked glycan (1 site)"/>
</dbReference>
<dbReference type="iPTMnet" id="O60381"/>
<dbReference type="PhosphoSitePlus" id="O60381"/>
<dbReference type="BioMuta" id="HBP1"/>
<dbReference type="jPOST" id="O60381"/>
<dbReference type="MassIVE" id="O60381"/>
<dbReference type="PaxDb" id="9606-ENSP00000222574"/>
<dbReference type="PeptideAtlas" id="O60381"/>
<dbReference type="ProteomicsDB" id="49383">
    <molecule id="O60381-1"/>
</dbReference>
<dbReference type="ProteomicsDB" id="49384">
    <molecule id="O60381-2"/>
</dbReference>
<dbReference type="ProteomicsDB" id="49385">
    <molecule id="O60381-3"/>
</dbReference>
<dbReference type="Antibodypedia" id="17158">
    <property type="antibodies" value="298 antibodies from 30 providers"/>
</dbReference>
<dbReference type="DNASU" id="26959"/>
<dbReference type="Ensembl" id="ENST00000222574.9">
    <molecule id="O60381-1"/>
    <property type="protein sequence ID" value="ENSP00000222574.4"/>
    <property type="gene ID" value="ENSG00000105856.14"/>
</dbReference>
<dbReference type="Ensembl" id="ENST00000468410.5">
    <molecule id="O60381-1"/>
    <property type="protein sequence ID" value="ENSP00000420500.1"/>
    <property type="gene ID" value="ENSG00000105856.14"/>
</dbReference>
<dbReference type="Ensembl" id="ENST00000485846.5">
    <molecule id="O60381-1"/>
    <property type="protein sequence ID" value="ENSP00000418738.1"/>
    <property type="gene ID" value="ENSG00000105856.14"/>
</dbReference>
<dbReference type="Ensembl" id="ENST00000638303.2">
    <molecule id="O60381-1"/>
    <property type="protein sequence ID" value="ENSP00000491311.1"/>
    <property type="gene ID" value="ENSG00000283847.2"/>
</dbReference>
<dbReference type="Ensembl" id="ENST00000638893.1">
    <molecule id="O60381-1"/>
    <property type="protein sequence ID" value="ENSP00000492167.1"/>
    <property type="gene ID" value="ENSG00000283847.2"/>
</dbReference>
<dbReference type="Ensembl" id="ENST00000640195.1">
    <molecule id="O60381-1"/>
    <property type="protein sequence ID" value="ENSP00000492343.1"/>
    <property type="gene ID" value="ENSG00000283847.2"/>
</dbReference>
<dbReference type="GeneID" id="26959"/>
<dbReference type="KEGG" id="hsa:26959"/>
<dbReference type="MANE-Select" id="ENST00000222574.9">
    <property type="protein sequence ID" value="ENSP00000222574.4"/>
    <property type="RefSeq nucleotide sequence ID" value="NM_012257.4"/>
    <property type="RefSeq protein sequence ID" value="NP_036389.2"/>
</dbReference>
<dbReference type="UCSC" id="uc003vdy.3">
    <molecule id="O60381-1"/>
    <property type="organism name" value="human"/>
</dbReference>
<dbReference type="AGR" id="HGNC:23200"/>
<dbReference type="CTD" id="26959"/>
<dbReference type="DisGeNET" id="26959"/>
<dbReference type="GeneCards" id="HBP1"/>
<dbReference type="HGNC" id="HGNC:23200">
    <property type="gene designation" value="HBP1"/>
</dbReference>
<dbReference type="HPA" id="ENSG00000105856">
    <property type="expression patterns" value="Low tissue specificity"/>
</dbReference>
<dbReference type="neXtProt" id="NX_O60381"/>
<dbReference type="OpenTargets" id="ENSG00000105856"/>
<dbReference type="PharmGKB" id="PA134901346"/>
<dbReference type="VEuPathDB" id="HostDB:ENSG00000105856"/>
<dbReference type="eggNOG" id="ENOG502QR1P">
    <property type="taxonomic scope" value="Eukaryota"/>
</dbReference>
<dbReference type="GeneTree" id="ENSGT00390000011239"/>
<dbReference type="HOGENOM" id="CLU_041151_0_0_1"/>
<dbReference type="InParanoid" id="O60381"/>
<dbReference type="OMA" id="CDDSTVF"/>
<dbReference type="OrthoDB" id="1919336at2759"/>
<dbReference type="PAN-GO" id="O60381">
    <property type="GO annotations" value="4 GO annotations based on evolutionary models"/>
</dbReference>
<dbReference type="PhylomeDB" id="O60381"/>
<dbReference type="TreeFam" id="TF105381"/>
<dbReference type="PathwayCommons" id="O60381"/>
<dbReference type="SignaLink" id="O60381"/>
<dbReference type="SIGNOR" id="O60381"/>
<dbReference type="BioGRID-ORCS" id="26959">
    <property type="hits" value="11 hits in 1178 CRISPR screens"/>
</dbReference>
<dbReference type="ChiTaRS" id="HBP1">
    <property type="organism name" value="human"/>
</dbReference>
<dbReference type="EvolutionaryTrace" id="O60381"/>
<dbReference type="GeneWiki" id="HBP1"/>
<dbReference type="GenomeRNAi" id="26959"/>
<dbReference type="Pharos" id="O60381">
    <property type="development level" value="Tbio"/>
</dbReference>
<dbReference type="PRO" id="PR:O60381"/>
<dbReference type="Proteomes" id="UP000005640">
    <property type="component" value="Chromosome 7"/>
</dbReference>
<dbReference type="RNAct" id="O60381">
    <property type="molecule type" value="protein"/>
</dbReference>
<dbReference type="Bgee" id="ENSG00000105856">
    <property type="expression patterns" value="Expressed in calcaneal tendon and 122 other cell types or tissues"/>
</dbReference>
<dbReference type="ExpressionAtlas" id="O60381">
    <property type="expression patterns" value="baseline and differential"/>
</dbReference>
<dbReference type="GO" id="GO:0000785">
    <property type="term" value="C:chromatin"/>
    <property type="evidence" value="ECO:0000247"/>
    <property type="project" value="NTNU_SB"/>
</dbReference>
<dbReference type="GO" id="GO:0016607">
    <property type="term" value="C:nuclear speck"/>
    <property type="evidence" value="ECO:0000314"/>
    <property type="project" value="HPA"/>
</dbReference>
<dbReference type="GO" id="GO:0005654">
    <property type="term" value="C:nucleoplasm"/>
    <property type="evidence" value="ECO:0000314"/>
    <property type="project" value="HPA"/>
</dbReference>
<dbReference type="GO" id="GO:0005634">
    <property type="term" value="C:nucleus"/>
    <property type="evidence" value="ECO:0000318"/>
    <property type="project" value="GO_Central"/>
</dbReference>
<dbReference type="GO" id="GO:0000981">
    <property type="term" value="F:DNA-binding transcription factor activity, RNA polymerase II-specific"/>
    <property type="evidence" value="ECO:0000247"/>
    <property type="project" value="NTNU_SB"/>
</dbReference>
<dbReference type="GO" id="GO:0003723">
    <property type="term" value="F:RNA binding"/>
    <property type="evidence" value="ECO:0007669"/>
    <property type="project" value="InterPro"/>
</dbReference>
<dbReference type="GO" id="GO:0000978">
    <property type="term" value="F:RNA polymerase II cis-regulatory region sequence-specific DNA binding"/>
    <property type="evidence" value="ECO:0000318"/>
    <property type="project" value="GO_Central"/>
</dbReference>
<dbReference type="GO" id="GO:0051726">
    <property type="term" value="P:regulation of cell cycle"/>
    <property type="evidence" value="ECO:0000303"/>
    <property type="project" value="UniProtKB"/>
</dbReference>
<dbReference type="GO" id="GO:0006357">
    <property type="term" value="P:regulation of transcription by RNA polymerase II"/>
    <property type="evidence" value="ECO:0000318"/>
    <property type="project" value="GO_Central"/>
</dbReference>
<dbReference type="GO" id="GO:0016055">
    <property type="term" value="P:Wnt signaling pathway"/>
    <property type="evidence" value="ECO:0007669"/>
    <property type="project" value="UniProtKB-KW"/>
</dbReference>
<dbReference type="CDD" id="cd21988">
    <property type="entry name" value="HMG-box_HBP1"/>
    <property type="match status" value="1"/>
</dbReference>
<dbReference type="FunFam" id="1.10.30.10:FF:000020">
    <property type="entry name" value="HMG box-containing protein 1"/>
    <property type="match status" value="1"/>
</dbReference>
<dbReference type="Gene3D" id="1.10.30.10">
    <property type="entry name" value="High mobility group box domain"/>
    <property type="match status" value="1"/>
</dbReference>
<dbReference type="InterPro" id="IPR003652">
    <property type="entry name" value="Ataxin_AXH_dom"/>
</dbReference>
<dbReference type="InterPro" id="IPR036096">
    <property type="entry name" value="Ataxin_AXH_dom_sf"/>
</dbReference>
<dbReference type="InterPro" id="IPR039655">
    <property type="entry name" value="HBP1"/>
</dbReference>
<dbReference type="InterPro" id="IPR009071">
    <property type="entry name" value="HMG_box_dom"/>
</dbReference>
<dbReference type="InterPro" id="IPR036910">
    <property type="entry name" value="HMG_box_dom_sf"/>
</dbReference>
<dbReference type="PANTHER" id="PTHR15499">
    <property type="entry name" value="HMG BOX-CONTAINING PROTEIN 1"/>
    <property type="match status" value="1"/>
</dbReference>
<dbReference type="PANTHER" id="PTHR15499:SF3">
    <property type="entry name" value="HMG BOX-CONTAINING PROTEIN 1"/>
    <property type="match status" value="1"/>
</dbReference>
<dbReference type="Pfam" id="PF08517">
    <property type="entry name" value="AXH"/>
    <property type="match status" value="1"/>
</dbReference>
<dbReference type="Pfam" id="PF00505">
    <property type="entry name" value="HMG_box"/>
    <property type="match status" value="1"/>
</dbReference>
<dbReference type="SMART" id="SM00536">
    <property type="entry name" value="AXH"/>
    <property type="match status" value="1"/>
</dbReference>
<dbReference type="SMART" id="SM00398">
    <property type="entry name" value="HMG"/>
    <property type="match status" value="1"/>
</dbReference>
<dbReference type="SUPFAM" id="SSF102031">
    <property type="entry name" value="AXH domain"/>
    <property type="match status" value="1"/>
</dbReference>
<dbReference type="SUPFAM" id="SSF47095">
    <property type="entry name" value="HMG-box"/>
    <property type="match status" value="1"/>
</dbReference>
<dbReference type="PROSITE" id="PS51148">
    <property type="entry name" value="AXH"/>
    <property type="match status" value="1"/>
</dbReference>
<dbReference type="PROSITE" id="PS50118">
    <property type="entry name" value="HMG_BOX_2"/>
    <property type="match status" value="1"/>
</dbReference>
<sequence>MVWEVKTNQMPNAVQKLLLVMDKRASGMNDSLELLQCNENLPSSPGYNSCDEHMELDDLPELQAVQSDPTQSGMYQLSSDVSHQEYPRSSWNQNTSDIPETTYRENEVDWLTELANIATSPQSPLMQCSFYNRSSPVHIIATSKSLHSYARPPPVSSSSKSEPAFPHHHWKEETPVRHERANSESESGIFCMSSLSDDDDLGWCNSWPSTVWHCFLKGTRLCFHKGSNKEWQDVEDFARAEGCDNEEDLQMGIHKGYGSDGLKLLSHEESVSFGESVLKLTFDPGTVEDGLLTVECKLDHPFYVKNKGWSSFYPSLTVVQHGIPCCEVHIGDVCLPPGHPDAINFDDSGVFDTFKSYDFTPMDSSAVYVLSSMARQRRASLSCGGPGGQDFARSGFSKNCGSPGSSQLSSNSLYAKAVKNHSSGTVSATSPNKCKRPMNAFMLFAKKYRVEYTQMYPGKDNRAISVILGDRWKKMKNEERRMYTLEAKALAEEQKRLNPDCWKRKRTNSGSQQH</sequence>
<comment type="function">
    <text evidence="4 5 6">Transcriptional repressor that binds to the promoter region of target genes. Plays a role in the regulation of the cell cycle and of the Wnt pathway. Binds preferentially to the sequence 5'-TTCATTCATTCA-3'. Binding to the histone H1.0 promoter is enhanced by interaction with RB1. Disrupts the interaction between DNA and TCF4.</text>
</comment>
<comment type="subunit">
    <text evidence="5 6 11">Binds the second PAH repeat of SIN3A (Probable). Binds TCF4 (PubMed:11500377). Binds RB1 (PubMed:10958660).</text>
</comment>
<comment type="interaction">
    <interactant intactId="EBI-954175">
        <id>O60381</id>
    </interactant>
    <interactant intactId="EBI-491274">
        <id>P06400</id>
        <label>RB1</label>
    </interactant>
    <organismsDiffer>false</organismsDiffer>
    <experiments>2</experiments>
</comment>
<comment type="subcellular location">
    <subcellularLocation>
        <location evidence="1 4">Nucleus</location>
    </subcellularLocation>
</comment>
<comment type="alternative products">
    <event type="alternative splicing"/>
    <isoform>
        <id>O60381-1</id>
        <name>1</name>
        <sequence type="displayed"/>
    </isoform>
    <isoform>
        <id>O60381-2</id>
        <name>2</name>
        <sequence type="described" ref="VSP_014655"/>
    </isoform>
    <isoform>
        <id>O60381-3</id>
        <name>3</name>
        <sequence type="described" ref="VSP_014656"/>
    </isoform>
</comment>
<comment type="PTM">
    <text evidence="7">Ubiquitinated by the CTLH E3 ubiquitin-protein ligase complex, leading to subsequent proteasomal degradation.</text>
</comment>
<comment type="sequence caution" evidence="10">
    <conflict type="erroneous initiation">
        <sequence resource="EMBL-CDS" id="BAB85059"/>
    </conflict>
</comment>
<comment type="online information" name="Atlas of Genetics and Cytogenetics in Oncology and Haematology">
    <link uri="https://atlasgeneticsoncology.org/gene/40791/HBP1"/>
</comment>
<accession>O60381</accession>
<accession>B3KVB7</accession>
<accession>Q8TBM1</accession>
<accession>Q8TE93</accession>
<accession>Q96AJ2</accession>
<name>HBP1_HUMAN</name>
<feature type="chain" id="PRO_0000048546" description="HMG box-containing protein 1">
    <location>
        <begin position="1"/>
        <end position="514"/>
    </location>
</feature>
<feature type="domain" description="AXH" evidence="2">
    <location>
        <begin position="203"/>
        <end position="345"/>
    </location>
</feature>
<feature type="DNA-binding region" description="HMG box" evidence="1">
    <location>
        <begin position="434"/>
        <end position="502"/>
    </location>
</feature>
<feature type="region of interest" description="Disordered" evidence="3">
    <location>
        <begin position="150"/>
        <end position="182"/>
    </location>
</feature>
<feature type="compositionally biased region" description="Basic and acidic residues" evidence="3">
    <location>
        <begin position="170"/>
        <end position="182"/>
    </location>
</feature>
<feature type="splice variant" id="VSP_014655" description="In isoform 2." evidence="9">
    <location>
        <begin position="463"/>
        <end position="514"/>
    </location>
</feature>
<feature type="splice variant" id="VSP_014656" description="In isoform 3." evidence="8">
    <original>GSQQH</original>
    <variation>VCFNK</variation>
    <location>
        <begin position="510"/>
        <end position="514"/>
    </location>
</feature>
<feature type="sequence conflict" description="In Ref. 5; AAH22329." evidence="10" ref="5">
    <original>Q</original>
    <variation>L</variation>
    <location>
        <position position="127"/>
    </location>
</feature>
<feature type="sequence conflict" description="In Ref. 5; AAH22329." evidence="10" ref="5">
    <original>S</original>
    <variation>P</variation>
    <location>
        <position position="348"/>
    </location>
</feature>
<feature type="strand" evidence="13">
    <location>
        <begin position="220"/>
        <end position="227"/>
    </location>
</feature>
<feature type="helix" evidence="13">
    <location>
        <begin position="234"/>
        <end position="240"/>
    </location>
</feature>
<feature type="turn" evidence="13">
    <location>
        <begin position="253"/>
        <end position="260"/>
    </location>
</feature>
<feature type="strand" evidence="13">
    <location>
        <begin position="262"/>
        <end position="272"/>
    </location>
</feature>
<feature type="strand" evidence="13">
    <location>
        <begin position="275"/>
        <end position="283"/>
    </location>
</feature>
<feature type="helix" evidence="13">
    <location>
        <begin position="287"/>
        <end position="289"/>
    </location>
</feature>
<feature type="strand" evidence="13">
    <location>
        <begin position="292"/>
        <end position="297"/>
    </location>
</feature>
<feature type="strand" evidence="13">
    <location>
        <begin position="301"/>
        <end position="304"/>
    </location>
</feature>
<feature type="turn" evidence="13">
    <location>
        <begin position="305"/>
        <end position="307"/>
    </location>
</feature>
<feature type="strand" evidence="13">
    <location>
        <begin position="308"/>
        <end position="313"/>
    </location>
</feature>
<feature type="helix" evidence="13">
    <location>
        <begin position="314"/>
        <end position="321"/>
    </location>
</feature>
<feature type="helix" evidence="12">
    <location>
        <begin position="440"/>
        <end position="447"/>
    </location>
</feature>
<feature type="helix" evidence="12">
    <location>
        <begin position="449"/>
        <end position="455"/>
    </location>
</feature>
<feature type="helix" evidence="12">
    <location>
        <begin position="461"/>
        <end position="474"/>
    </location>
</feature>
<feature type="helix" evidence="12">
    <location>
        <begin position="477"/>
        <end position="497"/>
    </location>
</feature>
<gene>
    <name type="primary">HBP1</name>
</gene>
<proteinExistence type="evidence at protein level"/>
<reference key="1">
    <citation type="journal article" date="2000" name="Mol. Cell. Biol.">
        <title>Involvement of retinoblastoma protein and HBP1 in histone H1(0) gene expression.</title>
        <authorList>
            <person name="Lemercier C."/>
            <person name="Duncliffe K."/>
            <person name="Boibessot I."/>
            <person name="Zhang H."/>
            <person name="Verdel A."/>
            <person name="Angelov D."/>
            <person name="Khochbin S."/>
        </authorList>
    </citation>
    <scope>NUCLEOTIDE SEQUENCE [MRNA] (ISOFORM 3)</scope>
    <scope>FUNCTION</scope>
    <scope>INTERACTION WITH RB1</scope>
    <source>
        <tissue>Brain</tissue>
    </source>
</reference>
<reference key="2">
    <citation type="journal article" date="2004" name="Nat. Genet.">
        <title>Complete sequencing and characterization of 21,243 full-length human cDNAs.</title>
        <authorList>
            <person name="Ota T."/>
            <person name="Suzuki Y."/>
            <person name="Nishikawa T."/>
            <person name="Otsuki T."/>
            <person name="Sugiyama T."/>
            <person name="Irie R."/>
            <person name="Wakamatsu A."/>
            <person name="Hayashi K."/>
            <person name="Sato H."/>
            <person name="Nagai K."/>
            <person name="Kimura K."/>
            <person name="Makita H."/>
            <person name="Sekine M."/>
            <person name="Obayashi M."/>
            <person name="Nishi T."/>
            <person name="Shibahara T."/>
            <person name="Tanaka T."/>
            <person name="Ishii S."/>
            <person name="Yamamoto J."/>
            <person name="Saito K."/>
            <person name="Kawai Y."/>
            <person name="Isono Y."/>
            <person name="Nakamura Y."/>
            <person name="Nagahari K."/>
            <person name="Murakami K."/>
            <person name="Yasuda T."/>
            <person name="Iwayanagi T."/>
            <person name="Wagatsuma M."/>
            <person name="Shiratori A."/>
            <person name="Sudo H."/>
            <person name="Hosoiri T."/>
            <person name="Kaku Y."/>
            <person name="Kodaira H."/>
            <person name="Kondo H."/>
            <person name="Sugawara M."/>
            <person name="Takahashi M."/>
            <person name="Kanda K."/>
            <person name="Yokoi T."/>
            <person name="Furuya T."/>
            <person name="Kikkawa E."/>
            <person name="Omura Y."/>
            <person name="Abe K."/>
            <person name="Kamihara K."/>
            <person name="Katsuta N."/>
            <person name="Sato K."/>
            <person name="Tanikawa M."/>
            <person name="Yamazaki M."/>
            <person name="Ninomiya K."/>
            <person name="Ishibashi T."/>
            <person name="Yamashita H."/>
            <person name="Murakawa K."/>
            <person name="Fujimori K."/>
            <person name="Tanai H."/>
            <person name="Kimata M."/>
            <person name="Watanabe M."/>
            <person name="Hiraoka S."/>
            <person name="Chiba Y."/>
            <person name="Ishida S."/>
            <person name="Ono Y."/>
            <person name="Takiguchi S."/>
            <person name="Watanabe S."/>
            <person name="Yosida M."/>
            <person name="Hotuta T."/>
            <person name="Kusano J."/>
            <person name="Kanehori K."/>
            <person name="Takahashi-Fujii A."/>
            <person name="Hara H."/>
            <person name="Tanase T.-O."/>
            <person name="Nomura Y."/>
            <person name="Togiya S."/>
            <person name="Komai F."/>
            <person name="Hara R."/>
            <person name="Takeuchi K."/>
            <person name="Arita M."/>
            <person name="Imose N."/>
            <person name="Musashino K."/>
            <person name="Yuuki H."/>
            <person name="Oshima A."/>
            <person name="Sasaki N."/>
            <person name="Aotsuka S."/>
            <person name="Yoshikawa Y."/>
            <person name="Matsunawa H."/>
            <person name="Ichihara T."/>
            <person name="Shiohata N."/>
            <person name="Sano S."/>
            <person name="Moriya S."/>
            <person name="Momiyama H."/>
            <person name="Satoh N."/>
            <person name="Takami S."/>
            <person name="Terashima Y."/>
            <person name="Suzuki O."/>
            <person name="Nakagawa S."/>
            <person name="Senoh A."/>
            <person name="Mizoguchi H."/>
            <person name="Goto Y."/>
            <person name="Shimizu F."/>
            <person name="Wakebe H."/>
            <person name="Hishigaki H."/>
            <person name="Watanabe T."/>
            <person name="Sugiyama A."/>
            <person name="Takemoto M."/>
            <person name="Kawakami B."/>
            <person name="Yamazaki M."/>
            <person name="Watanabe K."/>
            <person name="Kumagai A."/>
            <person name="Itakura S."/>
            <person name="Fukuzumi Y."/>
            <person name="Fujimori Y."/>
            <person name="Komiyama M."/>
            <person name="Tashiro H."/>
            <person name="Tanigami A."/>
            <person name="Fujiwara T."/>
            <person name="Ono T."/>
            <person name="Yamada K."/>
            <person name="Fujii Y."/>
            <person name="Ozaki K."/>
            <person name="Hirao M."/>
            <person name="Ohmori Y."/>
            <person name="Kawabata A."/>
            <person name="Hikiji T."/>
            <person name="Kobatake N."/>
            <person name="Inagaki H."/>
            <person name="Ikema Y."/>
            <person name="Okamoto S."/>
            <person name="Okitani R."/>
            <person name="Kawakami T."/>
            <person name="Noguchi S."/>
            <person name="Itoh T."/>
            <person name="Shigeta K."/>
            <person name="Senba T."/>
            <person name="Matsumura K."/>
            <person name="Nakajima Y."/>
            <person name="Mizuno T."/>
            <person name="Morinaga M."/>
            <person name="Sasaki M."/>
            <person name="Togashi T."/>
            <person name="Oyama M."/>
            <person name="Hata H."/>
            <person name="Watanabe M."/>
            <person name="Komatsu T."/>
            <person name="Mizushima-Sugano J."/>
            <person name="Satoh T."/>
            <person name="Shirai Y."/>
            <person name="Takahashi Y."/>
            <person name="Nakagawa K."/>
            <person name="Okumura K."/>
            <person name="Nagase T."/>
            <person name="Nomura N."/>
            <person name="Kikuchi H."/>
            <person name="Masuho Y."/>
            <person name="Yamashita R."/>
            <person name="Nakai K."/>
            <person name="Yada T."/>
            <person name="Nakamura Y."/>
            <person name="Ohara O."/>
            <person name="Isogai T."/>
            <person name="Sugano S."/>
        </authorList>
    </citation>
    <scope>NUCLEOTIDE SEQUENCE [LARGE SCALE MRNA] (ISOFORM 1)</scope>
    <scope>NUCLEOTIDE SEQUENCE [LARGE SCALE MRNA] OF 9-514 (ISOFORM 2)</scope>
    <source>
        <tissue>Hepatoma</tissue>
        <tissue>Testis</tissue>
    </source>
</reference>
<reference key="3">
    <citation type="journal article" date="2003" name="Nature">
        <title>The DNA sequence of human chromosome 7.</title>
        <authorList>
            <person name="Hillier L.W."/>
            <person name="Fulton R.S."/>
            <person name="Fulton L.A."/>
            <person name="Graves T.A."/>
            <person name="Pepin K.H."/>
            <person name="Wagner-McPherson C."/>
            <person name="Layman D."/>
            <person name="Maas J."/>
            <person name="Jaeger S."/>
            <person name="Walker R."/>
            <person name="Wylie K."/>
            <person name="Sekhon M."/>
            <person name="Becker M.C."/>
            <person name="O'Laughlin M.D."/>
            <person name="Schaller M.E."/>
            <person name="Fewell G.A."/>
            <person name="Delehaunty K.D."/>
            <person name="Miner T.L."/>
            <person name="Nash W.E."/>
            <person name="Cordes M."/>
            <person name="Du H."/>
            <person name="Sun H."/>
            <person name="Edwards J."/>
            <person name="Bradshaw-Cordum H."/>
            <person name="Ali J."/>
            <person name="Andrews S."/>
            <person name="Isak A."/>
            <person name="Vanbrunt A."/>
            <person name="Nguyen C."/>
            <person name="Du F."/>
            <person name="Lamar B."/>
            <person name="Courtney L."/>
            <person name="Kalicki J."/>
            <person name="Ozersky P."/>
            <person name="Bielicki L."/>
            <person name="Scott K."/>
            <person name="Holmes A."/>
            <person name="Harkins R."/>
            <person name="Harris A."/>
            <person name="Strong C.M."/>
            <person name="Hou S."/>
            <person name="Tomlinson C."/>
            <person name="Dauphin-Kohlberg S."/>
            <person name="Kozlowicz-Reilly A."/>
            <person name="Leonard S."/>
            <person name="Rohlfing T."/>
            <person name="Rock S.M."/>
            <person name="Tin-Wollam A.-M."/>
            <person name="Abbott A."/>
            <person name="Minx P."/>
            <person name="Maupin R."/>
            <person name="Strowmatt C."/>
            <person name="Latreille P."/>
            <person name="Miller N."/>
            <person name="Johnson D."/>
            <person name="Murray J."/>
            <person name="Woessner J.P."/>
            <person name="Wendl M.C."/>
            <person name="Yang S.-P."/>
            <person name="Schultz B.R."/>
            <person name="Wallis J.W."/>
            <person name="Spieth J."/>
            <person name="Bieri T.A."/>
            <person name="Nelson J.O."/>
            <person name="Berkowicz N."/>
            <person name="Wohldmann P.E."/>
            <person name="Cook L.L."/>
            <person name="Hickenbotham M.T."/>
            <person name="Eldred J."/>
            <person name="Williams D."/>
            <person name="Bedell J.A."/>
            <person name="Mardis E.R."/>
            <person name="Clifton S.W."/>
            <person name="Chissoe S.L."/>
            <person name="Marra M.A."/>
            <person name="Raymond C."/>
            <person name="Haugen E."/>
            <person name="Gillett W."/>
            <person name="Zhou Y."/>
            <person name="James R."/>
            <person name="Phelps K."/>
            <person name="Iadanoto S."/>
            <person name="Bubb K."/>
            <person name="Simms E."/>
            <person name="Levy R."/>
            <person name="Clendenning J."/>
            <person name="Kaul R."/>
            <person name="Kent W.J."/>
            <person name="Furey T.S."/>
            <person name="Baertsch R.A."/>
            <person name="Brent M.R."/>
            <person name="Keibler E."/>
            <person name="Flicek P."/>
            <person name="Bork P."/>
            <person name="Suyama M."/>
            <person name="Bailey J.A."/>
            <person name="Portnoy M.E."/>
            <person name="Torrents D."/>
            <person name="Chinwalla A.T."/>
            <person name="Gish W.R."/>
            <person name="Eddy S.R."/>
            <person name="McPherson J.D."/>
            <person name="Olson M.V."/>
            <person name="Eichler E.E."/>
            <person name="Green E.D."/>
            <person name="Waterston R.H."/>
            <person name="Wilson R.K."/>
        </authorList>
    </citation>
    <scope>NUCLEOTIDE SEQUENCE [LARGE SCALE GENOMIC DNA]</scope>
</reference>
<reference key="4">
    <citation type="submission" date="2005-07" db="EMBL/GenBank/DDBJ databases">
        <authorList>
            <person name="Mural R.J."/>
            <person name="Istrail S."/>
            <person name="Sutton G.G."/>
            <person name="Florea L."/>
            <person name="Halpern A.L."/>
            <person name="Mobarry C.M."/>
            <person name="Lippert R."/>
            <person name="Walenz B."/>
            <person name="Shatkay H."/>
            <person name="Dew I."/>
            <person name="Miller J.R."/>
            <person name="Flanigan M.J."/>
            <person name="Edwards N.J."/>
            <person name="Bolanos R."/>
            <person name="Fasulo D."/>
            <person name="Halldorsson B.V."/>
            <person name="Hannenhalli S."/>
            <person name="Turner R."/>
            <person name="Yooseph S."/>
            <person name="Lu F."/>
            <person name="Nusskern D.R."/>
            <person name="Shue B.C."/>
            <person name="Zheng X.H."/>
            <person name="Zhong F."/>
            <person name="Delcher A.L."/>
            <person name="Huson D.H."/>
            <person name="Kravitz S.A."/>
            <person name="Mouchard L."/>
            <person name="Reinert K."/>
            <person name="Remington K.A."/>
            <person name="Clark A.G."/>
            <person name="Waterman M.S."/>
            <person name="Eichler E.E."/>
            <person name="Adams M.D."/>
            <person name="Hunkapiller M.W."/>
            <person name="Myers E.W."/>
            <person name="Venter J.C."/>
        </authorList>
    </citation>
    <scope>NUCLEOTIDE SEQUENCE [LARGE SCALE GENOMIC DNA]</scope>
</reference>
<reference key="5">
    <citation type="journal article" date="2004" name="Genome Res.">
        <title>The status, quality, and expansion of the NIH full-length cDNA project: the Mammalian Gene Collection (MGC).</title>
        <authorList>
            <consortium name="The MGC Project Team"/>
        </authorList>
    </citation>
    <scope>NUCLEOTIDE SEQUENCE [LARGE SCALE MRNA] (ISOFORM 1)</scope>
    <source>
        <tissue>Brain</tissue>
        <tissue>Uterus</tissue>
    </source>
</reference>
<reference key="6">
    <citation type="journal article" date="1999" name="EMBO J.">
        <title>Human HMG box transcription factor HBP1: a role in hCD2 LCR function.</title>
        <authorList>
            <person name="Zhuma T."/>
            <person name="Tyrrell R."/>
            <person name="Sekkali B."/>
            <person name="Skavdis G."/>
            <person name="Saveliev A."/>
            <person name="Tolaini M."/>
            <person name="Roderick K."/>
            <person name="Norton T."/>
            <person name="Smerdon S."/>
            <person name="Sedgwick S."/>
            <person name="Festenstein R."/>
            <person name="Kioussis D."/>
        </authorList>
    </citation>
    <scope>FUNCTION</scope>
    <scope>SUBCELLULAR LOCATION</scope>
</reference>
<reference key="7">
    <citation type="journal article" date="2001" name="EMBO J.">
        <title>Negative regulation of the Wnt-beta-catenin pathway by the transcriptional repressor HBP1.</title>
        <authorList>
            <person name="Sampson E.M."/>
            <person name="Haque Z.K."/>
            <person name="Ku M.-C."/>
            <person name="Tevosian S.G."/>
            <person name="Albanese C."/>
            <person name="Pestell R.G."/>
            <person name="Paulson K.E."/>
            <person name="Yee A.S."/>
        </authorList>
    </citation>
    <scope>FUNCTION</scope>
    <scope>INTERACTION WITH TCF4</scope>
</reference>
<reference key="8">
    <citation type="journal article" date="2011" name="Sci. Signal.">
        <title>System-wide temporal characterization of the proteome and phosphoproteome of human embryonic stem cell differentiation.</title>
        <authorList>
            <person name="Rigbolt K.T."/>
            <person name="Prokhorova T.A."/>
            <person name="Akimov V."/>
            <person name="Henningsen J."/>
            <person name="Johansen P.T."/>
            <person name="Kratchmarova I."/>
            <person name="Kassem M."/>
            <person name="Mann M."/>
            <person name="Olsen J.V."/>
            <person name="Blagoev B."/>
        </authorList>
    </citation>
    <scope>IDENTIFICATION BY MASS SPECTROMETRY [LARGE SCALE ANALYSIS]</scope>
</reference>
<reference key="9">
    <citation type="journal article" date="2013" name="J. Proteome Res.">
        <title>Toward a comprehensive characterization of a human cancer cell phosphoproteome.</title>
        <authorList>
            <person name="Zhou H."/>
            <person name="Di Palma S."/>
            <person name="Preisinger C."/>
            <person name="Peng M."/>
            <person name="Polat A.N."/>
            <person name="Heck A.J."/>
            <person name="Mohammed S."/>
        </authorList>
    </citation>
    <scope>IDENTIFICATION BY MASS SPECTROMETRY [LARGE SCALE ANALYSIS]</scope>
    <source>
        <tissue>Cervix carcinoma</tissue>
        <tissue>Erythroleukemia</tissue>
    </source>
</reference>
<reference key="10">
    <citation type="journal article" date="2014" name="J. Proteomics">
        <title>An enzyme assisted RP-RPLC approach for in-depth analysis of human liver phosphoproteome.</title>
        <authorList>
            <person name="Bian Y."/>
            <person name="Song C."/>
            <person name="Cheng K."/>
            <person name="Dong M."/>
            <person name="Wang F."/>
            <person name="Huang J."/>
            <person name="Sun D."/>
            <person name="Wang L."/>
            <person name="Ye M."/>
            <person name="Zou H."/>
        </authorList>
    </citation>
    <scope>IDENTIFICATION BY MASS SPECTROMETRY [LARGE SCALE ANALYSIS]</scope>
    <source>
        <tissue>Liver</tissue>
    </source>
</reference>
<reference key="11">
    <citation type="journal article" date="2018" name="Elife">
        <title>The multi-subunit GID/CTLH E3 ligase promotes proliferation and targets the transcription factor Hbp1 for degradation.</title>
        <authorList>
            <person name="Lampert F."/>
            <person name="Stafa D."/>
            <person name="Goga A."/>
            <person name="Soste M.V."/>
            <person name="Gilberto S."/>
            <person name="Olieric N."/>
            <person name="Picotti P."/>
            <person name="Stoffel M."/>
            <person name="Peter M."/>
        </authorList>
    </citation>
    <scope>UBIQUITINATION</scope>
    <scope>INTERACTION WITH SIN3A</scope>
</reference>
<reference key="12">
    <citation type="submission" date="2007-07" db="PDB data bank">
        <title>Solution structure of the HMG box domain from human HMG-box transcription factor 1.</title>
        <authorList>
            <consortium name="RIKEN structural genomics initiative (RSGI)"/>
        </authorList>
    </citation>
    <scope>STRUCTURE BY NMR OF 422-503</scope>
</reference>
<organism>
    <name type="scientific">Homo sapiens</name>
    <name type="common">Human</name>
    <dbReference type="NCBI Taxonomy" id="9606"/>
    <lineage>
        <taxon>Eukaryota</taxon>
        <taxon>Metazoa</taxon>
        <taxon>Chordata</taxon>
        <taxon>Craniata</taxon>
        <taxon>Vertebrata</taxon>
        <taxon>Euteleostomi</taxon>
        <taxon>Mammalia</taxon>
        <taxon>Eutheria</taxon>
        <taxon>Euarchontoglires</taxon>
        <taxon>Primates</taxon>
        <taxon>Haplorrhini</taxon>
        <taxon>Catarrhini</taxon>
        <taxon>Hominidae</taxon>
        <taxon>Homo</taxon>
    </lineage>
</organism>
<evidence type="ECO:0000255" key="1">
    <source>
        <dbReference type="PROSITE-ProRule" id="PRU00267"/>
    </source>
</evidence>
<evidence type="ECO:0000255" key="2">
    <source>
        <dbReference type="PROSITE-ProRule" id="PRU00496"/>
    </source>
</evidence>
<evidence type="ECO:0000256" key="3">
    <source>
        <dbReference type="SAM" id="MobiDB-lite"/>
    </source>
</evidence>
<evidence type="ECO:0000269" key="4">
    <source>
    </source>
</evidence>
<evidence type="ECO:0000269" key="5">
    <source>
    </source>
</evidence>
<evidence type="ECO:0000269" key="6">
    <source>
    </source>
</evidence>
<evidence type="ECO:0000269" key="7">
    <source>
    </source>
</evidence>
<evidence type="ECO:0000303" key="8">
    <source>
    </source>
</evidence>
<evidence type="ECO:0000303" key="9">
    <source>
    </source>
</evidence>
<evidence type="ECO:0000305" key="10"/>
<evidence type="ECO:0000305" key="11">
    <source>
    </source>
</evidence>
<evidence type="ECO:0007829" key="12">
    <source>
        <dbReference type="PDB" id="2E6O"/>
    </source>
</evidence>
<evidence type="ECO:0007829" key="13">
    <source>
        <dbReference type="PDB" id="3QVE"/>
    </source>
</evidence>